<name>FMM2_NEIGO</name>
<organism>
    <name type="scientific">Neisseria gonorrhoeae</name>
    <dbReference type="NCBI Taxonomy" id="485"/>
    <lineage>
        <taxon>Bacteria</taxon>
        <taxon>Pseudomonadati</taxon>
        <taxon>Pseudomonadota</taxon>
        <taxon>Betaproteobacteria</taxon>
        <taxon>Neisseriales</taxon>
        <taxon>Neisseriaceae</taxon>
        <taxon>Neisseria</taxon>
    </lineage>
</organism>
<keyword id="KW-0130">Cell adhesion</keyword>
<keyword id="KW-1015">Disulfide bond</keyword>
<keyword id="KW-0281">Fimbrium</keyword>
<keyword id="KW-0325">Glycoprotein</keyword>
<keyword id="KW-0472">Membrane</keyword>
<keyword id="KW-0488">Methylation</keyword>
<keyword id="KW-0812">Transmembrane</keyword>
<keyword id="KW-1133">Transmembrane helix</keyword>
<protein>
    <recommendedName>
        <fullName>Type IV major pilin protein PilE</fullName>
    </recommendedName>
    <alternativeName>
        <fullName>Pilin</fullName>
    </alternativeName>
</protein>
<proteinExistence type="inferred from homology"/>
<gene>
    <name type="primary">pilE</name>
</gene>
<comment type="function">
    <text evidence="2">Major component of the type IV pilus (T4P) that plays a role in cellular adherence, microcolony formation, resistance to neutrophil mediated killing, twitching motility as well as transformation. Mediates the attachment and the formation of bacterial microcolonies on host epithelial cells. Mechanistically, pili retractation induces host NF-kappa-B activation in infected cells, which is temporally associated with the formation of gonococcal microcolonies.</text>
</comment>
<comment type="subunit">
    <text>The pili are polar flexible filaments of about 5.4 nanometers diameter and 2.5 micrometers average length; they consist of only a single polypeptide chain arranged in a helical configuration of five subunits per turn in the assembled pilus.</text>
</comment>
<comment type="subcellular location">
    <subcellularLocation>
        <location>Fimbrium</location>
    </subcellularLocation>
    <subcellularLocation>
        <location evidence="3">Membrane</location>
        <topology evidence="3">Single-pass membrane protein</topology>
    </subcellularLocation>
</comment>
<comment type="similarity">
    <text evidence="5">Belongs to the N-Me-Phe pilin family.</text>
</comment>
<evidence type="ECO:0000250" key="1"/>
<evidence type="ECO:0000250" key="2">
    <source>
        <dbReference type="UniProtKB" id="P02974"/>
    </source>
</evidence>
<evidence type="ECO:0000255" key="3"/>
<evidence type="ECO:0000255" key="4">
    <source>
        <dbReference type="PROSITE-ProRule" id="PRU01070"/>
    </source>
</evidence>
<evidence type="ECO:0000305" key="5"/>
<sequence>MNTLQKGFTLIELMIVIAIVGILAAVALPAYQDYTARAQVSEAILLAEGQKSAVTEYYLNHGIWPKDNTSAGVASSSSIKGKYVKEVKVENGVVTATMNSSNVNKEIQGKKLSLWAKRQDGSVKWFCGQPVTRNAKDDTVTADATGNDGKIDTKHLPSTCRDNFDAS</sequence>
<reference key="1">
    <citation type="journal article" date="1987" name="Gene">
        <title>Structural analysis of the pilE region of Neisseria gonorrhoeae P9.</title>
        <authorList>
            <person name="Perry A.C.F."/>
            <person name="Nicholson I.J."/>
            <person name="Saunders J.R."/>
        </authorList>
    </citation>
    <scope>NUCLEOTIDE SEQUENCE [GENOMIC DNA]</scope>
    <source>
        <strain>P9-2</strain>
    </source>
</reference>
<dbReference type="EMBL" id="M18245">
    <property type="protein sequence ID" value="AAA25473.1"/>
    <property type="molecule type" value="Genomic_DNA"/>
</dbReference>
<dbReference type="PIR" id="A29611">
    <property type="entry name" value="A29611"/>
</dbReference>
<dbReference type="SMR" id="P11764"/>
<dbReference type="GlyCosmos" id="P11764">
    <property type="glycosylation" value="1 site, No reported glycans"/>
</dbReference>
<dbReference type="GO" id="GO:0016020">
    <property type="term" value="C:membrane"/>
    <property type="evidence" value="ECO:0007669"/>
    <property type="project" value="UniProtKB-SubCell"/>
</dbReference>
<dbReference type="GO" id="GO:0009289">
    <property type="term" value="C:pilus"/>
    <property type="evidence" value="ECO:0007669"/>
    <property type="project" value="UniProtKB-SubCell"/>
</dbReference>
<dbReference type="GO" id="GO:0007155">
    <property type="term" value="P:cell adhesion"/>
    <property type="evidence" value="ECO:0007669"/>
    <property type="project" value="UniProtKB-KW"/>
</dbReference>
<dbReference type="Gene3D" id="3.30.700.10">
    <property type="entry name" value="Glycoprotein, Type 4 Pilin"/>
    <property type="match status" value="1"/>
</dbReference>
<dbReference type="InterPro" id="IPR012902">
    <property type="entry name" value="N_methyl_site"/>
</dbReference>
<dbReference type="InterPro" id="IPR001082">
    <property type="entry name" value="Pilin"/>
</dbReference>
<dbReference type="InterPro" id="IPR045584">
    <property type="entry name" value="Pilin-like"/>
</dbReference>
<dbReference type="InterPro" id="IPR050470">
    <property type="entry name" value="T4P/T2SS_Core"/>
</dbReference>
<dbReference type="NCBIfam" id="TIGR02532">
    <property type="entry name" value="IV_pilin_GFxxxE"/>
    <property type="match status" value="1"/>
</dbReference>
<dbReference type="PANTHER" id="PTHR30093">
    <property type="entry name" value="GENERAL SECRETION PATHWAY PROTEIN G"/>
    <property type="match status" value="1"/>
</dbReference>
<dbReference type="PANTHER" id="PTHR30093:SF34">
    <property type="entry name" value="PREPILIN PEPTIDASE-DEPENDENT PROTEIN D"/>
    <property type="match status" value="1"/>
</dbReference>
<dbReference type="Pfam" id="PF07963">
    <property type="entry name" value="N_methyl"/>
    <property type="match status" value="1"/>
</dbReference>
<dbReference type="Pfam" id="PF00114">
    <property type="entry name" value="Pilin"/>
    <property type="match status" value="1"/>
</dbReference>
<dbReference type="SUPFAM" id="SSF54523">
    <property type="entry name" value="Pili subunits"/>
    <property type="match status" value="1"/>
</dbReference>
<dbReference type="PROSITE" id="PS00409">
    <property type="entry name" value="PROKAR_NTER_METHYL"/>
    <property type="match status" value="1"/>
</dbReference>
<accession>P11764</accession>
<feature type="propeptide" id="PRO_0000024156" description="Leader sequence" evidence="4">
    <location>
        <begin position="1"/>
        <end position="7"/>
    </location>
</feature>
<feature type="chain" id="PRO_0000024157" description="Type IV major pilin protein PilE">
    <location>
        <begin position="8"/>
        <end position="167"/>
    </location>
</feature>
<feature type="transmembrane region" description="Helical" evidence="3">
    <location>
        <begin position="8"/>
        <end position="28"/>
    </location>
</feature>
<feature type="modified residue" description="N-methylphenylalanine" evidence="4">
    <location>
        <position position="8"/>
    </location>
</feature>
<feature type="glycosylation site" description="O-linked (GlcNAc...) serine" evidence="1">
    <location>
        <position position="70"/>
    </location>
</feature>
<feature type="disulfide bond" evidence="1">
    <location>
        <begin position="127"/>
        <end position="160"/>
    </location>
</feature>